<gene>
    <name evidence="1" type="primary">atpF2</name>
    <name type="ordered locus">Pcar_2995</name>
</gene>
<protein>
    <recommendedName>
        <fullName evidence="1">ATP synthase subunit b 2</fullName>
    </recommendedName>
    <alternativeName>
        <fullName evidence="1">ATP synthase F(0) sector subunit b 2</fullName>
    </alternativeName>
    <alternativeName>
        <fullName evidence="1">ATPase subunit I 2</fullName>
    </alternativeName>
    <alternativeName>
        <fullName evidence="1">F-type ATPase subunit b 2</fullName>
        <shortName evidence="1">F-ATPase subunit b 2</shortName>
    </alternativeName>
</protein>
<name>ATPF2_SYNC1</name>
<accession>Q3A077</accession>
<reference key="1">
    <citation type="submission" date="2005-10" db="EMBL/GenBank/DDBJ databases">
        <title>Complete sequence of Pelobacter carbinolicus DSM 2380.</title>
        <authorList>
            <person name="Copeland A."/>
            <person name="Lucas S."/>
            <person name="Lapidus A."/>
            <person name="Barry K."/>
            <person name="Detter J.C."/>
            <person name="Glavina T."/>
            <person name="Hammon N."/>
            <person name="Israni S."/>
            <person name="Pitluck S."/>
            <person name="Chertkov O."/>
            <person name="Schmutz J."/>
            <person name="Larimer F."/>
            <person name="Land M."/>
            <person name="Kyrpides N."/>
            <person name="Ivanova N."/>
            <person name="Richardson P."/>
        </authorList>
    </citation>
    <scope>NUCLEOTIDE SEQUENCE [LARGE SCALE GENOMIC DNA]</scope>
    <source>
        <strain>DSM 2380 / NBRC 103641 / GraBd1</strain>
    </source>
</reference>
<proteinExistence type="inferred from homology"/>
<sequence>MLIDWFTVSAQAINFLILVALLKRFLYGPVLRAMDRREERLASCFAEAENKRLEAQQLEENYRSLLQELEEARGVKLRQVEEEIEDQRHKLLAAARQEAAEIQSAWAASIRDERSSFFTELKKRVGSEMLNIARKSLGDLANIELEQLMVERFNERLAQLDRNEQQQVALAASERGVLVRSPFTLPPELRDRLTQGVRQALGEEIDMQYQDRADMPLGIELTVGGLKLSWGVDSYFEQLERDVATLYDAQAATVSEGSP</sequence>
<comment type="function">
    <text evidence="1">F(1)F(0) ATP synthase produces ATP from ADP in the presence of a proton or sodium gradient. F-type ATPases consist of two structural domains, F(1) containing the extramembraneous catalytic core and F(0) containing the membrane proton channel, linked together by a central stalk and a peripheral stalk. During catalysis, ATP synthesis in the catalytic domain of F(1) is coupled via a rotary mechanism of the central stalk subunits to proton translocation.</text>
</comment>
<comment type="function">
    <text evidence="1">Component of the F(0) channel, it forms part of the peripheral stalk, linking F(1) to F(0).</text>
</comment>
<comment type="subunit">
    <text evidence="1">F-type ATPases have 2 components, F(1) - the catalytic core - and F(0) - the membrane proton channel. F(1) has five subunits: alpha(3), beta(3), gamma(1), delta(1), epsilon(1). F(0) has three main subunits: a(1), b(2) and c(10-14). The alpha and beta chains form an alternating ring which encloses part of the gamma chain. F(1) is attached to F(0) by a central stalk formed by the gamma and epsilon chains, while a peripheral stalk is formed by the delta and b chains.</text>
</comment>
<comment type="subcellular location">
    <subcellularLocation>
        <location evidence="1">Cell inner membrane</location>
        <topology evidence="1">Single-pass membrane protein</topology>
    </subcellularLocation>
</comment>
<comment type="similarity">
    <text evidence="1">Belongs to the ATPase B chain family.</text>
</comment>
<keyword id="KW-0066">ATP synthesis</keyword>
<keyword id="KW-0997">Cell inner membrane</keyword>
<keyword id="KW-1003">Cell membrane</keyword>
<keyword id="KW-0138">CF(0)</keyword>
<keyword id="KW-0375">Hydrogen ion transport</keyword>
<keyword id="KW-0406">Ion transport</keyword>
<keyword id="KW-0472">Membrane</keyword>
<keyword id="KW-1185">Reference proteome</keyword>
<keyword id="KW-0812">Transmembrane</keyword>
<keyword id="KW-1133">Transmembrane helix</keyword>
<keyword id="KW-0813">Transport</keyword>
<feature type="chain" id="PRO_0000368649" description="ATP synthase subunit b 2">
    <location>
        <begin position="1"/>
        <end position="259"/>
    </location>
</feature>
<feature type="transmembrane region" description="Helical" evidence="1">
    <location>
        <begin position="5"/>
        <end position="27"/>
    </location>
</feature>
<organism>
    <name type="scientific">Syntrophotalea carbinolica (strain DSM 2380 / NBRC 103641 / GraBd1)</name>
    <name type="common">Pelobacter carbinolicus</name>
    <dbReference type="NCBI Taxonomy" id="338963"/>
    <lineage>
        <taxon>Bacteria</taxon>
        <taxon>Pseudomonadati</taxon>
        <taxon>Thermodesulfobacteriota</taxon>
        <taxon>Desulfuromonadia</taxon>
        <taxon>Desulfuromonadales</taxon>
        <taxon>Syntrophotaleaceae</taxon>
        <taxon>Syntrophotalea</taxon>
    </lineage>
</organism>
<evidence type="ECO:0000255" key="1">
    <source>
        <dbReference type="HAMAP-Rule" id="MF_01398"/>
    </source>
</evidence>
<dbReference type="EMBL" id="CP000142">
    <property type="protein sequence ID" value="ABA90230.1"/>
    <property type="molecule type" value="Genomic_DNA"/>
</dbReference>
<dbReference type="RefSeq" id="WP_011342783.1">
    <property type="nucleotide sequence ID" value="NC_007498.2"/>
</dbReference>
<dbReference type="SMR" id="Q3A077"/>
<dbReference type="STRING" id="338963.Pcar_2995"/>
<dbReference type="KEGG" id="pca:Pcar_2995"/>
<dbReference type="eggNOG" id="COG0711">
    <property type="taxonomic scope" value="Bacteria"/>
</dbReference>
<dbReference type="HOGENOM" id="CLU_070737_0_0_7"/>
<dbReference type="OrthoDB" id="466272at2"/>
<dbReference type="Proteomes" id="UP000002534">
    <property type="component" value="Chromosome"/>
</dbReference>
<dbReference type="GO" id="GO:0005886">
    <property type="term" value="C:plasma membrane"/>
    <property type="evidence" value="ECO:0007669"/>
    <property type="project" value="UniProtKB-SubCell"/>
</dbReference>
<dbReference type="GO" id="GO:0045259">
    <property type="term" value="C:proton-transporting ATP synthase complex"/>
    <property type="evidence" value="ECO:0007669"/>
    <property type="project" value="UniProtKB-KW"/>
</dbReference>
<dbReference type="GO" id="GO:0046933">
    <property type="term" value="F:proton-transporting ATP synthase activity, rotational mechanism"/>
    <property type="evidence" value="ECO:0007669"/>
    <property type="project" value="UniProtKB-UniRule"/>
</dbReference>
<dbReference type="GO" id="GO:0046961">
    <property type="term" value="F:proton-transporting ATPase activity, rotational mechanism"/>
    <property type="evidence" value="ECO:0007669"/>
    <property type="project" value="TreeGrafter"/>
</dbReference>
<dbReference type="CDD" id="cd06503">
    <property type="entry name" value="ATP-synt_Fo_b"/>
    <property type="match status" value="1"/>
</dbReference>
<dbReference type="HAMAP" id="MF_01398">
    <property type="entry name" value="ATP_synth_b_bprime"/>
    <property type="match status" value="1"/>
</dbReference>
<dbReference type="InterPro" id="IPR017707">
    <property type="entry name" value="Alt_ATP_synth_F0_bsu"/>
</dbReference>
<dbReference type="InterPro" id="IPR002146">
    <property type="entry name" value="ATP_synth_b/b'su_bac/chlpt"/>
</dbReference>
<dbReference type="InterPro" id="IPR050059">
    <property type="entry name" value="ATP_synthase_B_chain"/>
</dbReference>
<dbReference type="NCBIfam" id="TIGR03321">
    <property type="entry name" value="alt_F1F0_F0_B"/>
    <property type="match status" value="1"/>
</dbReference>
<dbReference type="PANTHER" id="PTHR33445">
    <property type="entry name" value="ATP SYNTHASE SUBUNIT B', CHLOROPLASTIC"/>
    <property type="match status" value="1"/>
</dbReference>
<dbReference type="PANTHER" id="PTHR33445:SF2">
    <property type="entry name" value="ATP SYNTHASE SUBUNIT B', CHLOROPLASTIC"/>
    <property type="match status" value="1"/>
</dbReference>
<dbReference type="Pfam" id="PF00430">
    <property type="entry name" value="ATP-synt_B"/>
    <property type="match status" value="1"/>
</dbReference>